<protein>
    <recommendedName>
        <fullName>Uncharacterized protein R58</fullName>
    </recommendedName>
</protein>
<reference key="1">
    <citation type="journal article" date="2004" name="Science">
        <title>The 1.2-megabase genome sequence of Mimivirus.</title>
        <authorList>
            <person name="Raoult D."/>
            <person name="Audic S."/>
            <person name="Robert C."/>
            <person name="Abergel C."/>
            <person name="Renesto P."/>
            <person name="Ogata H."/>
            <person name="La Scola B."/>
            <person name="Susan M."/>
            <person name="Claverie J.-M."/>
        </authorList>
    </citation>
    <scope>NUCLEOTIDE SEQUENCE [LARGE SCALE GENOMIC DNA]</scope>
    <source>
        <strain>Rowbotham-Bradford</strain>
    </source>
</reference>
<sequence>MEPEYLSAIKNNDYTKAINELEKISNNDFFGKIRKINYDDLDSLDKFLDLPNIESINDIDVLKKYYQICVQKIKDFETEKDFMFEAIKLIDNKKVSISKILKKLFIICMFITNHIQDKIQECENKLDNKNI</sequence>
<proteinExistence type="predicted"/>
<name>YR058_MIMIV</name>
<dbReference type="EMBL" id="AY653733">
    <property type="protein sequence ID" value="AAV50333.1"/>
    <property type="molecule type" value="Genomic_DNA"/>
</dbReference>
<dbReference type="SMR" id="Q5UPD6"/>
<dbReference type="KEGG" id="vg:9924646"/>
<dbReference type="Proteomes" id="UP000001134">
    <property type="component" value="Genome"/>
</dbReference>
<keyword id="KW-1185">Reference proteome</keyword>
<organismHost>
    <name type="scientific">Acanthamoeba polyphaga</name>
    <name type="common">Amoeba</name>
    <dbReference type="NCBI Taxonomy" id="5757"/>
</organismHost>
<feature type="chain" id="PRO_0000071197" description="Uncharacterized protein R58">
    <location>
        <begin position="1"/>
        <end position="131"/>
    </location>
</feature>
<organism>
    <name type="scientific">Acanthamoeba polyphaga mimivirus</name>
    <name type="common">APMV</name>
    <dbReference type="NCBI Taxonomy" id="212035"/>
    <lineage>
        <taxon>Viruses</taxon>
        <taxon>Varidnaviria</taxon>
        <taxon>Bamfordvirae</taxon>
        <taxon>Nucleocytoviricota</taxon>
        <taxon>Megaviricetes</taxon>
        <taxon>Imitervirales</taxon>
        <taxon>Mimiviridae</taxon>
        <taxon>Megamimivirinae</taxon>
        <taxon>Mimivirus</taxon>
        <taxon>Mimivirus bradfordmassiliense</taxon>
    </lineage>
</organism>
<gene>
    <name type="ordered locus">MIMI_R58</name>
</gene>
<accession>Q5UPD6</accession>